<proteinExistence type="inferred from homology"/>
<gene>
    <name type="primary">tal</name>
    <name type="ordered locus">SPs0403</name>
</gene>
<keyword id="KW-0963">Cytoplasm</keyword>
<keyword id="KW-0570">Pentose shunt</keyword>
<keyword id="KW-0704">Schiff base</keyword>
<keyword id="KW-0808">Transferase</keyword>
<feature type="chain" id="PRO_0000411596" description="Probable transaldolase">
    <location>
        <begin position="1"/>
        <end position="214"/>
    </location>
</feature>
<feature type="active site" description="Schiff-base intermediate with substrate" evidence="1">
    <location>
        <position position="83"/>
    </location>
</feature>
<organism>
    <name type="scientific">Streptococcus pyogenes serotype M3 (strain SSI-1)</name>
    <dbReference type="NCBI Taxonomy" id="193567"/>
    <lineage>
        <taxon>Bacteria</taxon>
        <taxon>Bacillati</taxon>
        <taxon>Bacillota</taxon>
        <taxon>Bacilli</taxon>
        <taxon>Lactobacillales</taxon>
        <taxon>Streptococcaceae</taxon>
        <taxon>Streptococcus</taxon>
    </lineage>
</organism>
<protein>
    <recommendedName>
        <fullName>Probable transaldolase</fullName>
        <ecNumber>2.2.1.2</ecNumber>
    </recommendedName>
</protein>
<evidence type="ECO:0000250" key="1"/>
<evidence type="ECO:0000305" key="2"/>
<comment type="function">
    <text evidence="1">Transaldolase is important for the balance of metabolites in the pentose-phosphate pathway.</text>
</comment>
<comment type="catalytic activity">
    <reaction>
        <text>D-sedoheptulose 7-phosphate + D-glyceraldehyde 3-phosphate = D-erythrose 4-phosphate + beta-D-fructose 6-phosphate</text>
        <dbReference type="Rhea" id="RHEA:17053"/>
        <dbReference type="ChEBI" id="CHEBI:16897"/>
        <dbReference type="ChEBI" id="CHEBI:57483"/>
        <dbReference type="ChEBI" id="CHEBI:57634"/>
        <dbReference type="ChEBI" id="CHEBI:59776"/>
        <dbReference type="EC" id="2.2.1.2"/>
    </reaction>
</comment>
<comment type="pathway">
    <text>Carbohydrate degradation; pentose phosphate pathway; D-glyceraldehyde 3-phosphate and beta-D-fructose 6-phosphate from D-ribose 5-phosphate and D-xylulose 5-phosphate (non-oxidative stage): step 2/3.</text>
</comment>
<comment type="subcellular location">
    <subcellularLocation>
        <location evidence="1">Cytoplasm</location>
    </subcellularLocation>
</comment>
<comment type="similarity">
    <text evidence="2">Belongs to the transaldolase family. Type 3B subfamily.</text>
</comment>
<accession>P0DG13</accession>
<accession>P66960</accession>
<accession>Q99YJ2</accession>
<sequence length="214" mass="23272">MKFFLDTANVAAIKAINELGVVDGVTTNPTIISREGRDFETVIKEICDIVDGPISAEVTGLTADAMVEEARSIAKWHDNVVVKIPMTTEGLKATNILSKEGIKTNVTLIFTVSQGLMAMKAGATYISPFIGRLEDIGTDAYQLISDLREIIDLYDFQAEIIAASIRTTAHVEAVAKLGAHIATIPDPLFAKMTQHPLTTNGLKTFMEDWASFKK</sequence>
<reference key="1">
    <citation type="journal article" date="2003" name="Genome Res.">
        <title>Genome sequence of an M3 strain of Streptococcus pyogenes reveals a large-scale genomic rearrangement in invasive strains and new insights into phage evolution.</title>
        <authorList>
            <person name="Nakagawa I."/>
            <person name="Kurokawa K."/>
            <person name="Yamashita A."/>
            <person name="Nakata M."/>
            <person name="Tomiyasu Y."/>
            <person name="Okahashi N."/>
            <person name="Kawabata S."/>
            <person name="Yamazaki K."/>
            <person name="Shiba T."/>
            <person name="Yasunaga T."/>
            <person name="Hayashi H."/>
            <person name="Hattori M."/>
            <person name="Hamada S."/>
        </authorList>
    </citation>
    <scope>NUCLEOTIDE SEQUENCE [LARGE SCALE GENOMIC DNA]</scope>
    <source>
        <strain>SSI-1</strain>
    </source>
</reference>
<name>TAL_STRPQ</name>
<dbReference type="EC" id="2.2.1.2"/>
<dbReference type="EMBL" id="BA000034">
    <property type="protein sequence ID" value="BAC63498.1"/>
    <property type="molecule type" value="Genomic_DNA"/>
</dbReference>
<dbReference type="SMR" id="P0DG13"/>
<dbReference type="KEGG" id="sps:SPs0403"/>
<dbReference type="HOGENOM" id="CLU_079764_0_0_9"/>
<dbReference type="UniPathway" id="UPA00115">
    <property type="reaction ID" value="UER00414"/>
</dbReference>
<dbReference type="GO" id="GO:0005737">
    <property type="term" value="C:cytoplasm"/>
    <property type="evidence" value="ECO:0007669"/>
    <property type="project" value="UniProtKB-SubCell"/>
</dbReference>
<dbReference type="GO" id="GO:0016832">
    <property type="term" value="F:aldehyde-lyase activity"/>
    <property type="evidence" value="ECO:0007669"/>
    <property type="project" value="InterPro"/>
</dbReference>
<dbReference type="GO" id="GO:0004801">
    <property type="term" value="F:transaldolase activity"/>
    <property type="evidence" value="ECO:0007669"/>
    <property type="project" value="UniProtKB-UniRule"/>
</dbReference>
<dbReference type="GO" id="GO:0005975">
    <property type="term" value="P:carbohydrate metabolic process"/>
    <property type="evidence" value="ECO:0007669"/>
    <property type="project" value="InterPro"/>
</dbReference>
<dbReference type="GO" id="GO:0006098">
    <property type="term" value="P:pentose-phosphate shunt"/>
    <property type="evidence" value="ECO:0007669"/>
    <property type="project" value="UniProtKB-UniRule"/>
</dbReference>
<dbReference type="CDD" id="cd00956">
    <property type="entry name" value="Transaldolase_FSA"/>
    <property type="match status" value="1"/>
</dbReference>
<dbReference type="FunFam" id="3.20.20.70:FF:000018">
    <property type="entry name" value="Probable transaldolase"/>
    <property type="match status" value="1"/>
</dbReference>
<dbReference type="Gene3D" id="3.20.20.70">
    <property type="entry name" value="Aldolase class I"/>
    <property type="match status" value="1"/>
</dbReference>
<dbReference type="HAMAP" id="MF_00494">
    <property type="entry name" value="Transaldolase_3b"/>
    <property type="match status" value="1"/>
</dbReference>
<dbReference type="InterPro" id="IPR013785">
    <property type="entry name" value="Aldolase_TIM"/>
</dbReference>
<dbReference type="InterPro" id="IPR001585">
    <property type="entry name" value="TAL/FSA"/>
</dbReference>
<dbReference type="InterPro" id="IPR022999">
    <property type="entry name" value="Transaldolase_3B"/>
</dbReference>
<dbReference type="InterPro" id="IPR004731">
    <property type="entry name" value="Transaldolase_3B/F6P_aldolase"/>
</dbReference>
<dbReference type="InterPro" id="IPR018225">
    <property type="entry name" value="Transaldolase_AS"/>
</dbReference>
<dbReference type="InterPro" id="IPR033919">
    <property type="entry name" value="TSA/FSA_arc/bac"/>
</dbReference>
<dbReference type="NCBIfam" id="TIGR00875">
    <property type="entry name" value="fsa_talC_mipB"/>
    <property type="match status" value="1"/>
</dbReference>
<dbReference type="PANTHER" id="PTHR10683">
    <property type="entry name" value="TRANSALDOLASE"/>
    <property type="match status" value="1"/>
</dbReference>
<dbReference type="PANTHER" id="PTHR10683:SF36">
    <property type="entry name" value="TRANSALDOLASE"/>
    <property type="match status" value="1"/>
</dbReference>
<dbReference type="Pfam" id="PF00923">
    <property type="entry name" value="TAL_FSA"/>
    <property type="match status" value="1"/>
</dbReference>
<dbReference type="SUPFAM" id="SSF51569">
    <property type="entry name" value="Aldolase"/>
    <property type="match status" value="1"/>
</dbReference>
<dbReference type="PROSITE" id="PS01054">
    <property type="entry name" value="TRANSALDOLASE_1"/>
    <property type="match status" value="1"/>
</dbReference>
<dbReference type="PROSITE" id="PS00958">
    <property type="entry name" value="TRANSALDOLASE_2"/>
    <property type="match status" value="1"/>
</dbReference>